<evidence type="ECO:0000250" key="1">
    <source>
        <dbReference type="UniProtKB" id="P68137"/>
    </source>
</evidence>
<evidence type="ECO:0000305" key="2"/>
<protein>
    <recommendedName>
        <fullName>Actin-3</fullName>
        <ecNumber evidence="1">3.6.4.-</ecNumber>
    </recommendedName>
</protein>
<keyword id="KW-0067">ATP-binding</keyword>
<keyword id="KW-0963">Cytoplasm</keyword>
<keyword id="KW-0206">Cytoskeleton</keyword>
<keyword id="KW-0378">Hydrolase</keyword>
<keyword id="KW-0547">Nucleotide-binding</keyword>
<dbReference type="EC" id="3.6.4.-" evidence="1"/>
<dbReference type="EMBL" id="U27834">
    <property type="protein sequence ID" value="AAA82601.1"/>
    <property type="molecule type" value="mRNA"/>
</dbReference>
<dbReference type="SMR" id="P53457"/>
<dbReference type="GO" id="GO:0005737">
    <property type="term" value="C:cytoplasm"/>
    <property type="evidence" value="ECO:0007669"/>
    <property type="project" value="UniProtKB-KW"/>
</dbReference>
<dbReference type="GO" id="GO:0005856">
    <property type="term" value="C:cytoskeleton"/>
    <property type="evidence" value="ECO:0007669"/>
    <property type="project" value="UniProtKB-SubCell"/>
</dbReference>
<dbReference type="GO" id="GO:0005524">
    <property type="term" value="F:ATP binding"/>
    <property type="evidence" value="ECO:0007669"/>
    <property type="project" value="UniProtKB-KW"/>
</dbReference>
<dbReference type="GO" id="GO:0016787">
    <property type="term" value="F:hydrolase activity"/>
    <property type="evidence" value="ECO:0007669"/>
    <property type="project" value="UniProtKB-KW"/>
</dbReference>
<dbReference type="CDD" id="cd10224">
    <property type="entry name" value="ASKHA_NBD_actin"/>
    <property type="match status" value="1"/>
</dbReference>
<dbReference type="FunFam" id="3.30.420.40:FF:000131">
    <property type="entry name" value="Actin, alpha skeletal muscle"/>
    <property type="match status" value="1"/>
</dbReference>
<dbReference type="FunFam" id="3.30.420.40:FF:000291">
    <property type="entry name" value="Actin, alpha skeletal muscle"/>
    <property type="match status" value="1"/>
</dbReference>
<dbReference type="FunFam" id="3.90.640.10:FF:000047">
    <property type="entry name" value="Actin, alpha skeletal muscle"/>
    <property type="match status" value="1"/>
</dbReference>
<dbReference type="FunFam" id="3.30.420.40:FF:000058">
    <property type="entry name" value="Putative actin-related protein 5"/>
    <property type="match status" value="1"/>
</dbReference>
<dbReference type="Gene3D" id="3.30.420.40">
    <property type="match status" value="2"/>
</dbReference>
<dbReference type="Gene3D" id="3.90.640.10">
    <property type="entry name" value="Actin, Chain A, domain 4"/>
    <property type="match status" value="1"/>
</dbReference>
<dbReference type="InterPro" id="IPR004000">
    <property type="entry name" value="Actin"/>
</dbReference>
<dbReference type="InterPro" id="IPR020902">
    <property type="entry name" value="Actin/actin-like_CS"/>
</dbReference>
<dbReference type="InterPro" id="IPR004001">
    <property type="entry name" value="Actin_CS"/>
</dbReference>
<dbReference type="InterPro" id="IPR043129">
    <property type="entry name" value="ATPase_NBD"/>
</dbReference>
<dbReference type="PANTHER" id="PTHR11937">
    <property type="entry name" value="ACTIN"/>
    <property type="match status" value="1"/>
</dbReference>
<dbReference type="Pfam" id="PF00022">
    <property type="entry name" value="Actin"/>
    <property type="match status" value="1"/>
</dbReference>
<dbReference type="PRINTS" id="PR00190">
    <property type="entry name" value="ACTIN"/>
</dbReference>
<dbReference type="SMART" id="SM00268">
    <property type="entry name" value="ACTIN"/>
    <property type="match status" value="1"/>
</dbReference>
<dbReference type="SUPFAM" id="SSF53067">
    <property type="entry name" value="Actin-like ATPase domain"/>
    <property type="match status" value="2"/>
</dbReference>
<dbReference type="PROSITE" id="PS00406">
    <property type="entry name" value="ACTINS_1"/>
    <property type="match status" value="1"/>
</dbReference>
<dbReference type="PROSITE" id="PS00432">
    <property type="entry name" value="ACTINS_2"/>
    <property type="match status" value="1"/>
</dbReference>
<dbReference type="PROSITE" id="PS01132">
    <property type="entry name" value="ACTINS_ACT_LIKE"/>
    <property type="match status" value="1"/>
</dbReference>
<accession>P53457</accession>
<name>ACT3_DIBDE</name>
<sequence length="377" mass="41912">MAFNEDVGALVIDNGSGMCKAGFAGDDAPRAVFPSIVGRPRHQGVMVGMGQKDSYVGDEAQSKRGILTLKYPIEHGIVTNWDDMEKIWHHTFYNELRVAPEEHPVLLTEAPLNPKANREKMTQIVFETFNSPAMYVAIQAVLSLYASGRTTGIVLDSGDGVTHTVPIYEGYALPHAILRLDMAGRDLTDYLMKILTERGYSFTTTAEREIVRDIKEKLCYVALDFEQEMSNAASSSALEKTYELPDGQVITIGNERFRCPEALFQPNFLGLESVGIHETTYNSIMKCDLDIRKDLYANTVLSGGSTMYPGIADRMQKEISALAPSTMKIKIVAPPERKYSVWIGGSILASLSTFQQMWISKQEYDESGPAIVHRKCF</sequence>
<gene>
    <name type="primary">ACT3</name>
</gene>
<reference key="1">
    <citation type="journal article" date="1997" name="J. Mol. Evol.">
        <title>Isolation and characterization of five actin cDNAs from the cestode Diphyllobothrium dendriticum: a phylogenetic study of the multigene family.</title>
        <authorList>
            <person name="Wahlberg M.H."/>
            <person name="Johnson M.S."/>
        </authorList>
    </citation>
    <scope>NUCLEOTIDE SEQUENCE [MRNA]</scope>
</reference>
<comment type="function">
    <text>Actins are highly conserved proteins that are involved in various types of cell motility and are ubiquitously expressed in all eukaryotic cells.</text>
</comment>
<comment type="catalytic activity">
    <reaction evidence="1">
        <text>ATP + H2O = ADP + phosphate + H(+)</text>
        <dbReference type="Rhea" id="RHEA:13065"/>
        <dbReference type="ChEBI" id="CHEBI:15377"/>
        <dbReference type="ChEBI" id="CHEBI:15378"/>
        <dbReference type="ChEBI" id="CHEBI:30616"/>
        <dbReference type="ChEBI" id="CHEBI:43474"/>
        <dbReference type="ChEBI" id="CHEBI:456216"/>
    </reaction>
</comment>
<comment type="subcellular location">
    <subcellularLocation>
        <location>Cytoplasm</location>
        <location>Cytoskeleton</location>
    </subcellularLocation>
</comment>
<comment type="similarity">
    <text evidence="2">Belongs to the actin family.</text>
</comment>
<proteinExistence type="evidence at transcript level"/>
<organism>
    <name type="scientific">Dibothriocephalus dendriticus</name>
    <name type="common">Tapeworm</name>
    <name type="synonym">Diphyllobothrium dendriticum</name>
    <dbReference type="NCBI Taxonomy" id="28845"/>
    <lineage>
        <taxon>Eukaryota</taxon>
        <taxon>Metazoa</taxon>
        <taxon>Spiralia</taxon>
        <taxon>Lophotrochozoa</taxon>
        <taxon>Platyhelminthes</taxon>
        <taxon>Cestoda</taxon>
        <taxon>Eucestoda</taxon>
        <taxon>Diphyllobothriidea</taxon>
        <taxon>Diphyllobothriidae</taxon>
        <taxon>Dibothriocephalus</taxon>
    </lineage>
</organism>
<feature type="chain" id="PRO_0000088930" description="Actin-3">
    <location>
        <begin position="1"/>
        <end position="377"/>
    </location>
</feature>